<gene>
    <name evidence="4" type="ORF">HT_0072970</name>
</gene>
<accession>G0SHQ2</accession>
<keyword id="KW-0002">3D-structure</keyword>
<keyword id="KW-1185">Reference proteome</keyword>
<keyword id="KW-0687">Ribonucleoprotein</keyword>
<keyword id="KW-0689">Ribosomal protein</keyword>
<organism>
    <name type="scientific">Chaetomium thermophilum (strain DSM 1495 / CBS 144.50 / IMI 039719)</name>
    <name type="common">Thermochaetoides thermophila</name>
    <dbReference type="NCBI Taxonomy" id="759272"/>
    <lineage>
        <taxon>Eukaryota</taxon>
        <taxon>Fungi</taxon>
        <taxon>Dikarya</taxon>
        <taxon>Ascomycota</taxon>
        <taxon>Pezizomycotina</taxon>
        <taxon>Sordariomycetes</taxon>
        <taxon>Sordariomycetidae</taxon>
        <taxon>Sordariales</taxon>
        <taxon>Chaetomiaceae</taxon>
        <taxon>Thermochaetoides</taxon>
    </lineage>
</organism>
<dbReference type="EMBL" id="GL988048">
    <property type="protein sequence ID" value="EGS16972.1"/>
    <property type="molecule type" value="Genomic_DNA"/>
</dbReference>
<dbReference type="RefSeq" id="XP_006697554.1">
    <property type="nucleotide sequence ID" value="XM_006697491.1"/>
</dbReference>
<dbReference type="PDB" id="5AFF">
    <property type="method" value="X-ray"/>
    <property type="resolution" value="3.40 A"/>
    <property type="chains" value="C=1-173"/>
</dbReference>
<dbReference type="PDB" id="7OLC">
    <property type="method" value="EM"/>
    <property type="resolution" value="2.90 A"/>
    <property type="chains" value="LJ=1-173"/>
</dbReference>
<dbReference type="PDB" id="7OLD">
    <property type="method" value="EM"/>
    <property type="resolution" value="3.00 A"/>
    <property type="chains" value="LJ=1-173"/>
</dbReference>
<dbReference type="PDB" id="7OZS">
    <property type="method" value="EM"/>
    <property type="resolution" value="3.50 A"/>
    <property type="chains" value="B=1-173"/>
</dbReference>
<dbReference type="PDB" id="7Z3N">
    <property type="method" value="EM"/>
    <property type="resolution" value="3.20 A"/>
    <property type="chains" value="LJ=1-173"/>
</dbReference>
<dbReference type="PDB" id="7Z3O">
    <property type="method" value="EM"/>
    <property type="resolution" value="3.30 A"/>
    <property type="chains" value="LJ=1-173"/>
</dbReference>
<dbReference type="PDB" id="8I9R">
    <property type="method" value="EM"/>
    <property type="resolution" value="3.10 A"/>
    <property type="chains" value="LJ=1-173"/>
</dbReference>
<dbReference type="PDB" id="8OO0">
    <property type="method" value="EM"/>
    <property type="resolution" value="3.10 A"/>
    <property type="chains" value="LJ=1-173"/>
</dbReference>
<dbReference type="PDB" id="8PV1">
    <property type="method" value="EM"/>
    <property type="resolution" value="2.56 A"/>
    <property type="chains" value="LJ=1-173"/>
</dbReference>
<dbReference type="PDB" id="8PV2">
    <property type="method" value="EM"/>
    <property type="resolution" value="2.63 A"/>
    <property type="chains" value="LJ=1-173"/>
</dbReference>
<dbReference type="PDB" id="8PV3">
    <property type="method" value="EM"/>
    <property type="resolution" value="2.80 A"/>
    <property type="chains" value="LJ=1-173"/>
</dbReference>
<dbReference type="PDB" id="8PV4">
    <property type="method" value="EM"/>
    <property type="resolution" value="2.90 A"/>
    <property type="chains" value="LJ=1-173"/>
</dbReference>
<dbReference type="PDB" id="8PV5">
    <property type="method" value="EM"/>
    <property type="resolution" value="2.86 A"/>
    <property type="chains" value="LJ=1-173"/>
</dbReference>
<dbReference type="PDB" id="8PV6">
    <property type="method" value="EM"/>
    <property type="resolution" value="2.94 A"/>
    <property type="chains" value="LJ=1-173"/>
</dbReference>
<dbReference type="PDB" id="8PV7">
    <property type="method" value="EM"/>
    <property type="resolution" value="2.12 A"/>
    <property type="chains" value="LJ=1-173"/>
</dbReference>
<dbReference type="PDB" id="8PV8">
    <property type="method" value="EM"/>
    <property type="resolution" value="2.91 A"/>
    <property type="chains" value="LJ=1-173"/>
</dbReference>
<dbReference type="PDB" id="8PVK">
    <property type="method" value="EM"/>
    <property type="resolution" value="2.55 A"/>
    <property type="chains" value="LJ=1-173"/>
</dbReference>
<dbReference type="PDB" id="8PVL">
    <property type="method" value="EM"/>
    <property type="resolution" value="2.19 A"/>
    <property type="chains" value="LJ=1-173"/>
</dbReference>
<dbReference type="PDBsum" id="5AFF"/>
<dbReference type="PDBsum" id="7OLC"/>
<dbReference type="PDBsum" id="7OLD"/>
<dbReference type="PDBsum" id="7OZS"/>
<dbReference type="PDBsum" id="7Z3N"/>
<dbReference type="PDBsum" id="7Z3O"/>
<dbReference type="PDBsum" id="8I9R"/>
<dbReference type="PDBsum" id="8OO0"/>
<dbReference type="PDBsum" id="8PV1"/>
<dbReference type="PDBsum" id="8PV2"/>
<dbReference type="PDBsum" id="8PV3"/>
<dbReference type="PDBsum" id="8PV4"/>
<dbReference type="PDBsum" id="8PV5"/>
<dbReference type="PDBsum" id="8PV6"/>
<dbReference type="PDBsum" id="8PV7"/>
<dbReference type="PDBsum" id="8PV8"/>
<dbReference type="PDBsum" id="8PVK"/>
<dbReference type="PDBsum" id="8PVL"/>
<dbReference type="EMDB" id="EMD-13093"/>
<dbReference type="EMDB" id="EMD-13134"/>
<dbReference type="EMDB" id="EMD-17004"/>
<dbReference type="EMDB" id="EMD-17950"/>
<dbReference type="EMDB" id="EMD-17951"/>
<dbReference type="EMDB" id="EMD-17952"/>
<dbReference type="EMDB" id="EMD-17953"/>
<dbReference type="EMDB" id="EMD-17954"/>
<dbReference type="EMDB" id="EMD-17955"/>
<dbReference type="EMDB" id="EMD-17956"/>
<dbReference type="EMDB" id="EMD-17957"/>
<dbReference type="EMDB" id="EMD-17969"/>
<dbReference type="EMDB" id="EMD-17970"/>
<dbReference type="EMDB" id="EMD-35281"/>
<dbReference type="SMR" id="G0SHQ2"/>
<dbReference type="STRING" id="759272.G0SHQ2"/>
<dbReference type="KEGG" id="cthr:CTHT_0072970"/>
<dbReference type="eggNOG" id="KOG0397">
    <property type="taxonomic scope" value="Eukaryota"/>
</dbReference>
<dbReference type="HOGENOM" id="CLU_061015_3_0_1"/>
<dbReference type="OMA" id="NPMKELK"/>
<dbReference type="OrthoDB" id="1734943at2759"/>
<dbReference type="EvolutionaryTrace" id="G0SHQ2"/>
<dbReference type="Proteomes" id="UP000008066">
    <property type="component" value="Unassembled WGS sequence"/>
</dbReference>
<dbReference type="GO" id="GO:1990904">
    <property type="term" value="C:ribonucleoprotein complex"/>
    <property type="evidence" value="ECO:0007669"/>
    <property type="project" value="UniProtKB-KW"/>
</dbReference>
<dbReference type="GO" id="GO:0005840">
    <property type="term" value="C:ribosome"/>
    <property type="evidence" value="ECO:0007669"/>
    <property type="project" value="UniProtKB-KW"/>
</dbReference>
<dbReference type="GO" id="GO:0003735">
    <property type="term" value="F:structural constituent of ribosome"/>
    <property type="evidence" value="ECO:0007669"/>
    <property type="project" value="InterPro"/>
</dbReference>
<dbReference type="GO" id="GO:0006412">
    <property type="term" value="P:translation"/>
    <property type="evidence" value="ECO:0007669"/>
    <property type="project" value="InterPro"/>
</dbReference>
<dbReference type="FunFam" id="3.30.1440.10:FF:000002">
    <property type="entry name" value="60S ribosomal protein L11"/>
    <property type="match status" value="1"/>
</dbReference>
<dbReference type="Gene3D" id="3.30.1440.10">
    <property type="match status" value="1"/>
</dbReference>
<dbReference type="InterPro" id="IPR002132">
    <property type="entry name" value="Ribosomal_uL5"/>
</dbReference>
<dbReference type="InterPro" id="IPR031309">
    <property type="entry name" value="Ribosomal_uL5_C"/>
</dbReference>
<dbReference type="InterPro" id="IPR020929">
    <property type="entry name" value="Ribosomal_uL5_CS"/>
</dbReference>
<dbReference type="InterPro" id="IPR022803">
    <property type="entry name" value="Ribosomal_uL5_dom_sf"/>
</dbReference>
<dbReference type="InterPro" id="IPR031310">
    <property type="entry name" value="Ribosomal_uL5_N"/>
</dbReference>
<dbReference type="NCBIfam" id="NF003258">
    <property type="entry name" value="PRK04219.1"/>
    <property type="match status" value="1"/>
</dbReference>
<dbReference type="PANTHER" id="PTHR11994">
    <property type="entry name" value="60S RIBOSOMAL PROTEIN L11-RELATED"/>
    <property type="match status" value="1"/>
</dbReference>
<dbReference type="Pfam" id="PF00281">
    <property type="entry name" value="Ribosomal_L5"/>
    <property type="match status" value="1"/>
</dbReference>
<dbReference type="Pfam" id="PF00673">
    <property type="entry name" value="Ribosomal_L5_C"/>
    <property type="match status" value="1"/>
</dbReference>
<dbReference type="PIRSF" id="PIRSF002161">
    <property type="entry name" value="Ribosomal_L5"/>
    <property type="match status" value="1"/>
</dbReference>
<dbReference type="SUPFAM" id="SSF55282">
    <property type="entry name" value="RL5-like"/>
    <property type="match status" value="1"/>
</dbReference>
<dbReference type="PROSITE" id="PS00358">
    <property type="entry name" value="RIBOSOMAL_L5"/>
    <property type="match status" value="1"/>
</dbReference>
<comment type="function">
    <text evidence="1">Component of the ribosome, a large ribonucleoprotein complex responsible for the synthesis of proteins in the cell (PubMed:37291423). The small ribosomal subunit (SSU) binds messenger RNAs (mRNAs) and translates the encoded message by selecting cognate aminoacyl-transfer RNA (tRNA) molecules. The large subunit (LSU) contains the ribosomal catalytic site termed the peptidyl transferase center (PTC), which catalyzes the formation of peptide bonds, thereby polymerizing the amino acids delivered by tRNAs into a polypeptide chain. The nascent polypeptides leave the ribosome through a tunnel in the LSU and interact with protein factors that function in enzymatic processing, targeting, and the membrane insertion of nascent chains at the exit of the ribosomal tunnel.</text>
</comment>
<comment type="subunit">
    <text evidence="1">Component of a hexameric 5S RNP precursor complex, composed of 5S RNA, RRS1, RPF2, RPL5, RPL11 and SYO1; this complex acts as a precursor for ribosome assembly.</text>
</comment>
<comment type="similarity">
    <text evidence="2">Belongs to the universal ribosomal protein uL5 family.</text>
</comment>
<proteinExistence type="evidence at protein level"/>
<sequence>MSSEKAQNPMRELRIQKLVLNISVGESGDRLTRAAKVLEQLSGQTPVYSKARYTVRQFGIRRNEKIAVHVTVRGPKAEEILERGLKVKEYELRRRNFSETGNFGFGISEHIDLGIKYDPSIGIYGMDFYCCMTRPGERVAKRRRCKSRIGASHRITREETIRWFKQRFDGIVR</sequence>
<feature type="chain" id="PRO_0000461684" description="Large ribosomal subunit protein uL5">
    <location>
        <begin position="1"/>
        <end position="173"/>
    </location>
</feature>
<feature type="helix" evidence="25">
    <location>
        <begin position="9"/>
        <end position="11"/>
    </location>
</feature>
<feature type="strand" evidence="24">
    <location>
        <begin position="17"/>
        <end position="23"/>
    </location>
</feature>
<feature type="helix" evidence="24">
    <location>
        <begin position="29"/>
        <end position="42"/>
    </location>
</feature>
<feature type="strand" evidence="24">
    <location>
        <begin position="67"/>
        <end position="74"/>
    </location>
</feature>
<feature type="helix" evidence="24">
    <location>
        <begin position="75"/>
        <end position="87"/>
    </location>
</feature>
<feature type="turn" evidence="24">
    <location>
        <begin position="88"/>
        <end position="90"/>
    </location>
</feature>
<feature type="strand" evidence="25">
    <location>
        <begin position="91"/>
        <end position="93"/>
    </location>
</feature>
<feature type="helix" evidence="25">
    <location>
        <begin position="94"/>
        <end position="96"/>
    </location>
</feature>
<feature type="strand" evidence="25">
    <location>
        <begin position="99"/>
        <end position="101"/>
    </location>
</feature>
<feature type="strand" evidence="24">
    <location>
        <begin position="103"/>
        <end position="108"/>
    </location>
</feature>
<feature type="turn" evidence="24">
    <location>
        <begin position="110"/>
        <end position="113"/>
    </location>
</feature>
<feature type="turn" evidence="24">
    <location>
        <begin position="119"/>
        <end position="121"/>
    </location>
</feature>
<feature type="strand" evidence="24">
    <location>
        <begin position="126"/>
        <end position="130"/>
    </location>
</feature>
<feature type="helix" evidence="25">
    <location>
        <begin position="137"/>
        <end position="140"/>
    </location>
</feature>
<feature type="turn" evidence="25">
    <location>
        <begin position="151"/>
        <end position="153"/>
    </location>
</feature>
<feature type="helix" evidence="24">
    <location>
        <begin position="157"/>
        <end position="166"/>
    </location>
</feature>
<feature type="strand" evidence="25">
    <location>
        <begin position="171"/>
        <end position="173"/>
    </location>
</feature>
<reference evidence="5" key="1">
    <citation type="journal article" date="2011" name="Cell">
        <title>Insight into structure and assembly of the nuclear pore complex by utilizing the genome of a eukaryotic thermophile.</title>
        <authorList>
            <person name="Amlacher S."/>
            <person name="Sarges P."/>
            <person name="Flemming D."/>
            <person name="van Noort V."/>
            <person name="Kunze R."/>
            <person name="Devos D.P."/>
            <person name="Arumugam M."/>
            <person name="Bork P."/>
            <person name="Hurt E."/>
        </authorList>
    </citation>
    <scope>NUCLEOTIDE SEQUENCE [LARGE SCALE GENOMIC DNA]</scope>
    <source>
        <strain>DSM 1495 / CBS 144.50 / IMI 039719</strain>
    </source>
</reference>
<reference evidence="6" key="2">
    <citation type="journal article" date="2015" name="Nat. Commun.">
        <title>Symportin 1 chaperones 5S RNP assembly during ribosome biogenesis by occupying an essential rRNA-binding site.</title>
        <authorList>
            <person name="Calvino F.R."/>
            <person name="Kharde S."/>
            <person name="Ori A."/>
            <person name="Hendricks A."/>
            <person name="Wild K."/>
            <person name="Kressler D."/>
            <person name="Bange G."/>
            <person name="Hurt E."/>
            <person name="Beck M."/>
            <person name="Sinning I."/>
        </authorList>
    </citation>
    <scope>X-RAY CRYSTALLOGRAPHY (3.40 ANGSTROMS)</scope>
</reference>
<reference evidence="7 8" key="3">
    <citation type="journal article" date="2022" name="Nat. Commun.">
        <title>High-resolution structures of a thermophilic eukaryotic 80S ribosome reveal atomistic details of translocation.</title>
        <authorList>
            <person name="Kisonaite M."/>
            <person name="Wild K."/>
            <person name="Lapouge K."/>
            <person name="Ruppert T."/>
            <person name="Sinning I."/>
        </authorList>
    </citation>
    <scope>STRUCTURE BY ELECTRON MICROSCOPY (2.90 ANGSTROMS)</scope>
</reference>
<reference evidence="12" key="4">
    <citation type="journal article" date="2023" name="EMBO Rep.">
        <title>Mechanism of 5S RNP recruitment and helicase-surveilled rRNA maturation during pre-60S biogenesis.</title>
        <authorList>
            <person name="Lau B."/>
            <person name="Huang Z."/>
            <person name="Kellner N."/>
            <person name="Niu S."/>
            <person name="Berninghausen O."/>
            <person name="Beckmann R."/>
            <person name="Hurt E."/>
            <person name="Cheng J."/>
        </authorList>
    </citation>
    <scope>STRUCTURE BY ELECTRON MICROSCOPY (3.10 ANGSTROMS)</scope>
</reference>
<reference evidence="14 15 16 17 18 19 20 21 22 23" key="5">
    <citation type="journal article" date="2023" name="EMBO Rep.">
        <title>Structural insights into coordinating 5S RNP rotation with ITS2 pre-RNA processing during ribosome formation.</title>
        <authorList>
            <person name="Thoms M."/>
            <person name="Lau B."/>
            <person name="Cheng J."/>
            <person name="Fromm L."/>
            <person name="Denk T."/>
            <person name="Kellner N."/>
            <person name="Flemming D."/>
            <person name="Fischer P."/>
            <person name="Falquet L."/>
            <person name="Berninghausen O."/>
            <person name="Beckmann R."/>
            <person name="Hurt E."/>
        </authorList>
    </citation>
    <scope>STRUCTURE BY ELECTRON MICROSCOPY (2.12 ANGSTROMS)</scope>
</reference>
<reference evidence="10 11" key="6">
    <citation type="journal article" date="2023" name="Nat. Struct. Mol. Biol.">
        <title>Structural inventory of cotranslational protein folding by the eukaryotic RAC complex.</title>
        <authorList>
            <person name="Kisonaite M."/>
            <person name="Wild K."/>
            <person name="Lapouge K."/>
            <person name="Gese G.V."/>
            <person name="Kellner N."/>
            <person name="Hurt E."/>
            <person name="Sinning I."/>
        </authorList>
    </citation>
    <scope>STRUCTURE BY ELECTRON MICROSCOPY (3.20 ANGSTROMS)</scope>
</reference>
<reference evidence="9" key="7">
    <citation type="journal article" date="2023" name="Nat. Struct. Mol. Biol.">
        <title>Structure of nascent 5S RNPs at the crossroad between ribosome assembly and MDM2-p53 pathways.</title>
        <authorList>
            <person name="Castillo Duque de Estrada N.M."/>
            <person name="Thoms M."/>
            <person name="Flemming D."/>
            <person name="Hammaren H.M."/>
            <person name="Buschauer R."/>
            <person name="Ameismeier M."/>
            <person name="Bassler J."/>
            <person name="Beck M."/>
            <person name="Beckmann R."/>
            <person name="Hurt E."/>
        </authorList>
    </citation>
    <scope>STRUCTURE BY ELECTRON MICROSCOPY (3.50 ANGSTROMS) IN COMPLEX WITH RPL5; RRS1; RPF2; SYO1 AND 5S RNA</scope>
    <scope>FUNCTION</scope>
    <scope>SUBUNIT</scope>
</reference>
<reference evidence="13" key="8">
    <citation type="journal article" date="2024" name="Nat. Commun.">
        <title>Methionine aminopeptidase 2 and its autoproteolysis product have different binding sites on the ribosome.</title>
        <authorList>
            <person name="Klein M.A."/>
            <person name="Wild K."/>
            <person name="Kisonaite M."/>
            <person name="Sinning I."/>
        </authorList>
    </citation>
    <scope>STRUCTURE BY ELECTRON MICROSCOPY (3.10 ANGSTROMS)</scope>
</reference>
<protein>
    <recommendedName>
        <fullName evidence="3">Large ribosomal subunit protein uL5</fullName>
    </recommendedName>
    <alternativeName>
        <fullName evidence="3">60S ribosomal protein L11</fullName>
        <shortName evidence="3">ctRPL11</shortName>
    </alternativeName>
</protein>
<evidence type="ECO:0000269" key="1">
    <source>
    </source>
</evidence>
<evidence type="ECO:0000305" key="2"/>
<evidence type="ECO:0000305" key="3">
    <source>
    </source>
</evidence>
<evidence type="ECO:0000312" key="4">
    <source>
        <dbReference type="EMBL" id="EGS16972.1"/>
    </source>
</evidence>
<evidence type="ECO:0000312" key="5">
    <source>
        <dbReference type="Proteomes" id="UP000008066"/>
    </source>
</evidence>
<evidence type="ECO:0007744" key="6">
    <source>
        <dbReference type="PDB" id="5AFF"/>
    </source>
</evidence>
<evidence type="ECO:0007744" key="7">
    <source>
        <dbReference type="PDB" id="7OLC"/>
    </source>
</evidence>
<evidence type="ECO:0007744" key="8">
    <source>
        <dbReference type="PDB" id="7OLD"/>
    </source>
</evidence>
<evidence type="ECO:0007744" key="9">
    <source>
        <dbReference type="PDB" id="7OZS"/>
    </source>
</evidence>
<evidence type="ECO:0007744" key="10">
    <source>
        <dbReference type="PDB" id="7Z3N"/>
    </source>
</evidence>
<evidence type="ECO:0007744" key="11">
    <source>
        <dbReference type="PDB" id="7Z3O"/>
    </source>
</evidence>
<evidence type="ECO:0007744" key="12">
    <source>
        <dbReference type="PDB" id="8I9R"/>
    </source>
</evidence>
<evidence type="ECO:0007744" key="13">
    <source>
        <dbReference type="PDB" id="8OO0"/>
    </source>
</evidence>
<evidence type="ECO:0007744" key="14">
    <source>
        <dbReference type="PDB" id="8PV1"/>
    </source>
</evidence>
<evidence type="ECO:0007744" key="15">
    <source>
        <dbReference type="PDB" id="8PV2"/>
    </source>
</evidence>
<evidence type="ECO:0007744" key="16">
    <source>
        <dbReference type="PDB" id="8PV3"/>
    </source>
</evidence>
<evidence type="ECO:0007744" key="17">
    <source>
        <dbReference type="PDB" id="8PV4"/>
    </source>
</evidence>
<evidence type="ECO:0007744" key="18">
    <source>
        <dbReference type="PDB" id="8PV5"/>
    </source>
</evidence>
<evidence type="ECO:0007744" key="19">
    <source>
        <dbReference type="PDB" id="8PV6"/>
    </source>
</evidence>
<evidence type="ECO:0007744" key="20">
    <source>
        <dbReference type="PDB" id="8PV7"/>
    </source>
</evidence>
<evidence type="ECO:0007744" key="21">
    <source>
        <dbReference type="PDB" id="8PV8"/>
    </source>
</evidence>
<evidence type="ECO:0007744" key="22">
    <source>
        <dbReference type="PDB" id="8PVK"/>
    </source>
</evidence>
<evidence type="ECO:0007744" key="23">
    <source>
        <dbReference type="PDB" id="8PVL"/>
    </source>
</evidence>
<evidence type="ECO:0007829" key="24">
    <source>
        <dbReference type="PDB" id="5AFF"/>
    </source>
</evidence>
<evidence type="ECO:0007829" key="25">
    <source>
        <dbReference type="PDB" id="7OZS"/>
    </source>
</evidence>
<name>RL11_CHATD</name>